<sequence length="297" mass="33286">MKLTHSFIKQQARLGLNFFRYLLARMNHDRVNVNAGYLAYITLLSMVPMLTVLLSILSSFALFANAGEVIQDFVITHFVPAAGEVVKTALIEFVANTGKMTAVGGAFLFVAAIMLISNIDKNLNYIWRVQQKRRAVFSFSMYWMILTLGPILVGASIAATSYITSLKILDNEALSGVYNLFLRWLPFVLSYCAFVGLYLLVPNKKVHWQHAMLGALIAAILFELSKKGFAAYITQFPSYQLIYGALAAIPILFVWVYLCWLIVLVGAEVTAALGEREHWSDSQDMLHFAPLPKNEKE</sequence>
<protein>
    <recommendedName>
        <fullName evidence="1">UPF0761 membrane protein VC0395_A2314/VC395_2854</fullName>
    </recommendedName>
</protein>
<organism>
    <name type="scientific">Vibrio cholerae serotype O1 (strain ATCC 39541 / Classical Ogawa 395 / O395)</name>
    <dbReference type="NCBI Taxonomy" id="345073"/>
    <lineage>
        <taxon>Bacteria</taxon>
        <taxon>Pseudomonadati</taxon>
        <taxon>Pseudomonadota</taxon>
        <taxon>Gammaproteobacteria</taxon>
        <taxon>Vibrionales</taxon>
        <taxon>Vibrionaceae</taxon>
        <taxon>Vibrio</taxon>
    </lineage>
</organism>
<evidence type="ECO:0000255" key="1">
    <source>
        <dbReference type="HAMAP-Rule" id="MF_00672"/>
    </source>
</evidence>
<gene>
    <name type="ordered locus">VC0395_A2314</name>
    <name type="ordered locus">VC395_2854</name>
</gene>
<comment type="subcellular location">
    <subcellularLocation>
        <location evidence="1">Cell inner membrane</location>
        <topology evidence="1">Multi-pass membrane protein</topology>
    </subcellularLocation>
</comment>
<comment type="similarity">
    <text evidence="1">Belongs to the UPF0761 family.</text>
</comment>
<name>Y3514_VIBC3</name>
<proteinExistence type="inferred from homology"/>
<reference key="1">
    <citation type="submission" date="2007-03" db="EMBL/GenBank/DDBJ databases">
        <authorList>
            <person name="Heidelberg J."/>
        </authorList>
    </citation>
    <scope>NUCLEOTIDE SEQUENCE [LARGE SCALE GENOMIC DNA]</scope>
    <source>
        <strain>ATCC 39541 / Classical Ogawa 395 / O395</strain>
    </source>
</reference>
<reference key="2">
    <citation type="journal article" date="2008" name="PLoS ONE">
        <title>A recalibrated molecular clock and independent origins for the cholera pandemic clones.</title>
        <authorList>
            <person name="Feng L."/>
            <person name="Reeves P.R."/>
            <person name="Lan R."/>
            <person name="Ren Y."/>
            <person name="Gao C."/>
            <person name="Zhou Z."/>
            <person name="Ren Y."/>
            <person name="Cheng J."/>
            <person name="Wang W."/>
            <person name="Wang J."/>
            <person name="Qian W."/>
            <person name="Li D."/>
            <person name="Wang L."/>
        </authorList>
    </citation>
    <scope>NUCLEOTIDE SEQUENCE [LARGE SCALE GENOMIC DNA]</scope>
    <source>
        <strain>ATCC 39541 / Classical Ogawa 395 / O395</strain>
    </source>
</reference>
<dbReference type="EMBL" id="CP000627">
    <property type="protein sequence ID" value="ABQ20461.1"/>
    <property type="molecule type" value="Genomic_DNA"/>
</dbReference>
<dbReference type="EMBL" id="CP001235">
    <property type="protein sequence ID" value="ACP10838.1"/>
    <property type="molecule type" value="Genomic_DNA"/>
</dbReference>
<dbReference type="RefSeq" id="WP_001884068.1">
    <property type="nucleotide sequence ID" value="NZ_JAACZH010000007.1"/>
</dbReference>
<dbReference type="KEGG" id="vco:VC0395_A2314"/>
<dbReference type="KEGG" id="vcr:VC395_2854"/>
<dbReference type="PATRIC" id="fig|345073.21.peg.2752"/>
<dbReference type="eggNOG" id="COG1295">
    <property type="taxonomic scope" value="Bacteria"/>
</dbReference>
<dbReference type="HOGENOM" id="CLU_032288_0_0_6"/>
<dbReference type="OrthoDB" id="9808671at2"/>
<dbReference type="Proteomes" id="UP000000249">
    <property type="component" value="Chromosome 2"/>
</dbReference>
<dbReference type="GO" id="GO:0005886">
    <property type="term" value="C:plasma membrane"/>
    <property type="evidence" value="ECO:0007669"/>
    <property type="project" value="UniProtKB-SubCell"/>
</dbReference>
<dbReference type="HAMAP" id="MF_00672">
    <property type="entry name" value="UPF0761"/>
    <property type="match status" value="1"/>
</dbReference>
<dbReference type="InterPro" id="IPR023679">
    <property type="entry name" value="UPF0761_bac"/>
</dbReference>
<dbReference type="InterPro" id="IPR017039">
    <property type="entry name" value="Virul_fac_BrkB"/>
</dbReference>
<dbReference type="NCBIfam" id="NF002457">
    <property type="entry name" value="PRK01637.1"/>
    <property type="match status" value="1"/>
</dbReference>
<dbReference type="NCBIfam" id="TIGR00765">
    <property type="entry name" value="yihY_not_rbn"/>
    <property type="match status" value="1"/>
</dbReference>
<dbReference type="PANTHER" id="PTHR30213">
    <property type="entry name" value="INNER MEMBRANE PROTEIN YHJD"/>
    <property type="match status" value="1"/>
</dbReference>
<dbReference type="PANTHER" id="PTHR30213:SF0">
    <property type="entry name" value="UPF0761 MEMBRANE PROTEIN YIHY"/>
    <property type="match status" value="1"/>
</dbReference>
<dbReference type="Pfam" id="PF03631">
    <property type="entry name" value="Virul_fac_BrkB"/>
    <property type="match status" value="1"/>
</dbReference>
<dbReference type="PIRSF" id="PIRSF035875">
    <property type="entry name" value="RNase_BN"/>
    <property type="match status" value="1"/>
</dbReference>
<feature type="chain" id="PRO_1000072722" description="UPF0761 membrane protein VC0395_A2314/VC395_2854">
    <location>
        <begin position="1"/>
        <end position="297"/>
    </location>
</feature>
<feature type="transmembrane region" description="Helical" evidence="1">
    <location>
        <begin position="43"/>
        <end position="63"/>
    </location>
</feature>
<feature type="transmembrane region" description="Helical" evidence="1">
    <location>
        <begin position="100"/>
        <end position="120"/>
    </location>
</feature>
<feature type="transmembrane region" description="Helical" evidence="1">
    <location>
        <begin position="135"/>
        <end position="155"/>
    </location>
</feature>
<feature type="transmembrane region" description="Helical" evidence="1">
    <location>
        <begin position="181"/>
        <end position="201"/>
    </location>
</feature>
<feature type="transmembrane region" description="Helical" evidence="1">
    <location>
        <begin position="213"/>
        <end position="233"/>
    </location>
</feature>
<feature type="transmembrane region" description="Helical" evidence="1">
    <location>
        <begin position="245"/>
        <end position="265"/>
    </location>
</feature>
<keyword id="KW-0997">Cell inner membrane</keyword>
<keyword id="KW-1003">Cell membrane</keyword>
<keyword id="KW-0472">Membrane</keyword>
<keyword id="KW-0812">Transmembrane</keyword>
<keyword id="KW-1133">Transmembrane helix</keyword>
<accession>A5F4Q8</accession>
<accession>C3LYB7</accession>